<sequence>MESRNSYENKIDEISSLSESKEHPIDIQEKKDAFVNEFKGVLFDKNTRSSELLFNFYECCYKFLPRAQPQDKIDSYNSALQAFSIFCSSTLTHNNIGFDFKLFPEVKLSGEHLETVFKYKNGDDVREIAKINITLQKEEGGLYNLRGLDFKGCFFSGQNFSNYDIQYVNWGTSLFDVDTPCIFNAPAYNKSNEKSLKPVSENGLSGVLTDRNNKIKLITGVAPFDDILFMDDDFDDSSSEDDPVENSPVVTSPVVSSSKSSFQ</sequence>
<gene>
    <name type="primary">ypjB</name>
    <name type="ordered locus">b2649</name>
    <name type="ordered locus">JW2629</name>
</gene>
<reference key="1">
    <citation type="journal article" date="1997" name="Science">
        <title>The complete genome sequence of Escherichia coli K-12.</title>
        <authorList>
            <person name="Blattner F.R."/>
            <person name="Plunkett G. III"/>
            <person name="Bloch C.A."/>
            <person name="Perna N.T."/>
            <person name="Burland V."/>
            <person name="Riley M."/>
            <person name="Collado-Vides J."/>
            <person name="Glasner J.D."/>
            <person name="Rode C.K."/>
            <person name="Mayhew G.F."/>
            <person name="Gregor J."/>
            <person name="Davis N.W."/>
            <person name="Kirkpatrick H.A."/>
            <person name="Goeden M.A."/>
            <person name="Rose D.J."/>
            <person name="Mau B."/>
            <person name="Shao Y."/>
        </authorList>
    </citation>
    <scope>NUCLEOTIDE SEQUENCE [LARGE SCALE GENOMIC DNA]</scope>
    <source>
        <strain>K12 / MG1655 / ATCC 47076</strain>
    </source>
</reference>
<reference key="2">
    <citation type="journal article" date="2006" name="Mol. Syst. Biol.">
        <title>Highly accurate genome sequences of Escherichia coli K-12 strains MG1655 and W3110.</title>
        <authorList>
            <person name="Hayashi K."/>
            <person name="Morooka N."/>
            <person name="Yamamoto Y."/>
            <person name="Fujita K."/>
            <person name="Isono K."/>
            <person name="Choi S."/>
            <person name="Ohtsubo E."/>
            <person name="Baba T."/>
            <person name="Wanner B.L."/>
            <person name="Mori H."/>
            <person name="Horiuchi T."/>
        </authorList>
    </citation>
    <scope>NUCLEOTIDE SEQUENCE [LARGE SCALE GENOMIC DNA]</scope>
    <source>
        <strain>K12 / W3110 / ATCC 27325 / DSM 5911</strain>
    </source>
</reference>
<keyword id="KW-1185">Reference proteome</keyword>
<proteinExistence type="predicted"/>
<name>YPJB_ECOLI</name>
<accession>P76612</accession>
<accession>A0A385XJN5</accession>
<accession>Q2MAD1</accession>
<protein>
    <recommendedName>
        <fullName>Protein YpjB</fullName>
    </recommendedName>
</protein>
<evidence type="ECO:0000256" key="1">
    <source>
        <dbReference type="SAM" id="MobiDB-lite"/>
    </source>
</evidence>
<feature type="chain" id="PRO_0000169286" description="Protein YpjB">
    <location>
        <begin position="1"/>
        <end position="263"/>
    </location>
</feature>
<feature type="region of interest" description="Disordered" evidence="1">
    <location>
        <begin position="233"/>
        <end position="263"/>
    </location>
</feature>
<feature type="compositionally biased region" description="Acidic residues" evidence="1">
    <location>
        <begin position="233"/>
        <end position="244"/>
    </location>
</feature>
<feature type="compositionally biased region" description="Low complexity" evidence="1">
    <location>
        <begin position="245"/>
        <end position="263"/>
    </location>
</feature>
<dbReference type="EMBL" id="U00096">
    <property type="protein sequence ID" value="AYC08236.1"/>
    <property type="molecule type" value="Genomic_DNA"/>
</dbReference>
<dbReference type="EMBL" id="AP009048">
    <property type="protein sequence ID" value="BAE76775.1"/>
    <property type="molecule type" value="Genomic_DNA"/>
</dbReference>
<dbReference type="PIR" id="C65044">
    <property type="entry name" value="C65044"/>
</dbReference>
<dbReference type="BioGRID" id="4259216">
    <property type="interactions" value="12"/>
</dbReference>
<dbReference type="FunCoup" id="P76612">
    <property type="interactions" value="44"/>
</dbReference>
<dbReference type="IntAct" id="P76612">
    <property type="interactions" value="8"/>
</dbReference>
<dbReference type="EnsemblBacteria" id="AYC08236">
    <property type="protein sequence ID" value="AYC08236"/>
    <property type="gene ID" value="b2649"/>
</dbReference>
<dbReference type="KEGG" id="ecj:JW2629"/>
<dbReference type="KEGG" id="ecoc:C3026_14630"/>
<dbReference type="PATRIC" id="fig|83333.113.peg.2731"/>
<dbReference type="EchoBASE" id="EB3291"/>
<dbReference type="HOGENOM" id="CLU_099369_0_0_6"/>
<dbReference type="InParanoid" id="P76612"/>
<dbReference type="BioCyc" id="EcoCyc:G7384-MONOMER"/>
<dbReference type="PRO" id="PR:P76612"/>
<dbReference type="Proteomes" id="UP000000625">
    <property type="component" value="Chromosome"/>
</dbReference>
<dbReference type="InterPro" id="IPR035124">
    <property type="entry name" value="DUF5508"/>
</dbReference>
<dbReference type="Pfam" id="PF17621">
    <property type="entry name" value="DUF5508"/>
    <property type="match status" value="1"/>
</dbReference>
<organism>
    <name type="scientific">Escherichia coli (strain K12)</name>
    <dbReference type="NCBI Taxonomy" id="83333"/>
    <lineage>
        <taxon>Bacteria</taxon>
        <taxon>Pseudomonadati</taxon>
        <taxon>Pseudomonadota</taxon>
        <taxon>Gammaproteobacteria</taxon>
        <taxon>Enterobacterales</taxon>
        <taxon>Enterobacteriaceae</taxon>
        <taxon>Escherichia</taxon>
    </lineage>
</organism>